<comment type="function">
    <text evidence="1">Binds directly to 16S ribosomal RNA.</text>
</comment>
<comment type="mass spectrometry"/>
<comment type="similarity">
    <text evidence="1">Belongs to the bacterial ribosomal protein bS20 family.</text>
</comment>
<feature type="initiator methionine" description="Removed">
    <location>
        <position position="1"/>
    </location>
</feature>
<feature type="chain" id="PRO_0000168021" description="Small ribosomal subunit protein bS20">
    <location>
        <begin position="2"/>
        <end position="88"/>
    </location>
</feature>
<feature type="region of interest" description="Disordered" evidence="2">
    <location>
        <begin position="1"/>
        <end position="28"/>
    </location>
</feature>
<proteinExistence type="evidence at protein level"/>
<protein>
    <recommendedName>
        <fullName evidence="1">Small ribosomal subunit protein bS20</fullName>
    </recommendedName>
    <alternativeName>
        <fullName evidence="4">30S ribosomal protein S20</fullName>
    </alternativeName>
    <alternativeName>
        <fullName>RRP-S20</fullName>
    </alternativeName>
</protein>
<evidence type="ECO:0000255" key="1">
    <source>
        <dbReference type="HAMAP-Rule" id="MF_00500"/>
    </source>
</evidence>
<evidence type="ECO:0000256" key="2">
    <source>
        <dbReference type="SAM" id="MobiDB-lite"/>
    </source>
</evidence>
<evidence type="ECO:0000269" key="3">
    <source>
    </source>
</evidence>
<evidence type="ECO:0000305" key="4"/>
<keyword id="KW-0687">Ribonucleoprotein</keyword>
<keyword id="KW-0689">Ribosomal protein</keyword>
<keyword id="KW-0694">RNA-binding</keyword>
<keyword id="KW-0699">rRNA-binding</keyword>
<accession>Q6N0C7</accession>
<gene>
    <name evidence="1" type="primary">rpsT</name>
    <name type="ordered locus">RPA4836</name>
</gene>
<sequence>MANTSSAKKATRKIARRTAVNKSRRTQMRGSVRIVEEAIASGDRDAALKAMARAEPELMRAAQRNIIHRNAASRKVSRLTHSIAKLAK</sequence>
<name>RS20_RHOPA</name>
<dbReference type="EMBL" id="BX572608">
    <property type="protein sequence ID" value="CAE30276.1"/>
    <property type="molecule type" value="Genomic_DNA"/>
</dbReference>
<dbReference type="RefSeq" id="WP_011160368.1">
    <property type="nucleotide sequence ID" value="NZ_CP116810.1"/>
</dbReference>
<dbReference type="SMR" id="Q6N0C7"/>
<dbReference type="IntAct" id="Q6N0C7">
    <property type="interactions" value="1"/>
</dbReference>
<dbReference type="STRING" id="258594.RPA4836"/>
<dbReference type="GeneID" id="66895998"/>
<dbReference type="eggNOG" id="COG0268">
    <property type="taxonomic scope" value="Bacteria"/>
</dbReference>
<dbReference type="HOGENOM" id="CLU_160655_3_0_5"/>
<dbReference type="PhylomeDB" id="Q6N0C7"/>
<dbReference type="GO" id="GO:0005829">
    <property type="term" value="C:cytosol"/>
    <property type="evidence" value="ECO:0007669"/>
    <property type="project" value="TreeGrafter"/>
</dbReference>
<dbReference type="GO" id="GO:0015935">
    <property type="term" value="C:small ribosomal subunit"/>
    <property type="evidence" value="ECO:0007669"/>
    <property type="project" value="TreeGrafter"/>
</dbReference>
<dbReference type="GO" id="GO:0070181">
    <property type="term" value="F:small ribosomal subunit rRNA binding"/>
    <property type="evidence" value="ECO:0007669"/>
    <property type="project" value="TreeGrafter"/>
</dbReference>
<dbReference type="GO" id="GO:0003735">
    <property type="term" value="F:structural constituent of ribosome"/>
    <property type="evidence" value="ECO:0007669"/>
    <property type="project" value="InterPro"/>
</dbReference>
<dbReference type="GO" id="GO:0006412">
    <property type="term" value="P:translation"/>
    <property type="evidence" value="ECO:0007669"/>
    <property type="project" value="UniProtKB-UniRule"/>
</dbReference>
<dbReference type="Gene3D" id="1.20.58.110">
    <property type="entry name" value="Ribosomal protein S20"/>
    <property type="match status" value="1"/>
</dbReference>
<dbReference type="HAMAP" id="MF_00500">
    <property type="entry name" value="Ribosomal_bS20"/>
    <property type="match status" value="1"/>
</dbReference>
<dbReference type="InterPro" id="IPR002583">
    <property type="entry name" value="Ribosomal_bS20"/>
</dbReference>
<dbReference type="InterPro" id="IPR036510">
    <property type="entry name" value="Ribosomal_bS20_sf"/>
</dbReference>
<dbReference type="NCBIfam" id="TIGR00029">
    <property type="entry name" value="S20"/>
    <property type="match status" value="1"/>
</dbReference>
<dbReference type="PANTHER" id="PTHR33398">
    <property type="entry name" value="30S RIBOSOMAL PROTEIN S20"/>
    <property type="match status" value="1"/>
</dbReference>
<dbReference type="PANTHER" id="PTHR33398:SF1">
    <property type="entry name" value="SMALL RIBOSOMAL SUBUNIT PROTEIN BS20C"/>
    <property type="match status" value="1"/>
</dbReference>
<dbReference type="Pfam" id="PF01649">
    <property type="entry name" value="Ribosomal_S20p"/>
    <property type="match status" value="1"/>
</dbReference>
<dbReference type="SUPFAM" id="SSF46992">
    <property type="entry name" value="Ribosomal protein S20"/>
    <property type="match status" value="1"/>
</dbReference>
<reference key="1">
    <citation type="journal article" date="2004" name="Nat. Biotechnol.">
        <title>Complete genome sequence of the metabolically versatile photosynthetic bacterium Rhodopseudomonas palustris.</title>
        <authorList>
            <person name="Larimer F.W."/>
            <person name="Chain P."/>
            <person name="Hauser L."/>
            <person name="Lamerdin J.E."/>
            <person name="Malfatti S."/>
            <person name="Do L."/>
            <person name="Land M.L."/>
            <person name="Pelletier D.A."/>
            <person name="Beatty J.T."/>
            <person name="Lang A.S."/>
            <person name="Tabita F.R."/>
            <person name="Gibson J.L."/>
            <person name="Hanson T.E."/>
            <person name="Bobst C."/>
            <person name="Torres y Torres J.L."/>
            <person name="Peres C."/>
            <person name="Harrison F.H."/>
            <person name="Gibson J."/>
            <person name="Harwood C.S."/>
        </authorList>
    </citation>
    <scope>NUCLEOTIDE SEQUENCE [LARGE SCALE GENOMIC DNA]</scope>
    <source>
        <strain>ATCC BAA-98 / CGA009</strain>
    </source>
</reference>
<reference key="2">
    <citation type="journal article" date="2004" name="J. Proteome Res.">
        <title>Characterization of the 70S ribosome from Rhodopseudomonas palustris using an integrated 'top-down' and 'bottom-up' mass spectrometric approach.</title>
        <authorList>
            <person name="Strader M.B."/>
            <person name="VerBerkmoes N.C."/>
            <person name="Tabb D.L."/>
            <person name="Connelly H.M."/>
            <person name="Barton J.W."/>
            <person name="Bruce B.D."/>
            <person name="Pelletier D.A."/>
            <person name="Davison B.H."/>
            <person name="Hettich R.L."/>
            <person name="Larimer F.W."/>
            <person name="Hurst G.B."/>
        </authorList>
    </citation>
    <scope>MASS SPECTROMETRY</scope>
    <source>
        <strain>ATCC BAA-98 / CGA009</strain>
    </source>
</reference>
<organism>
    <name type="scientific">Rhodopseudomonas palustris (strain ATCC BAA-98 / CGA009)</name>
    <dbReference type="NCBI Taxonomy" id="258594"/>
    <lineage>
        <taxon>Bacteria</taxon>
        <taxon>Pseudomonadati</taxon>
        <taxon>Pseudomonadota</taxon>
        <taxon>Alphaproteobacteria</taxon>
        <taxon>Hyphomicrobiales</taxon>
        <taxon>Nitrobacteraceae</taxon>
        <taxon>Rhodopseudomonas</taxon>
    </lineage>
</organism>